<keyword id="KW-0028">Amino-acid biosynthesis</keyword>
<keyword id="KW-0057">Aromatic amino acid biosynthesis</keyword>
<keyword id="KW-0328">Glycosyltransferase</keyword>
<keyword id="KW-0460">Magnesium</keyword>
<keyword id="KW-0479">Metal-binding</keyword>
<keyword id="KW-0808">Transferase</keyword>
<keyword id="KW-0822">Tryptophan biosynthesis</keyword>
<dbReference type="EC" id="2.4.2.18" evidence="1"/>
<dbReference type="EMBL" id="CP001161">
    <property type="protein sequence ID" value="ACL30643.1"/>
    <property type="molecule type" value="Genomic_DNA"/>
</dbReference>
<dbReference type="RefSeq" id="WP_009874234.1">
    <property type="nucleotide sequence ID" value="NC_011833.1"/>
</dbReference>
<dbReference type="SMR" id="B8D972"/>
<dbReference type="KEGG" id="bap:BUAP5A_275"/>
<dbReference type="HOGENOM" id="CLU_034315_3_0_6"/>
<dbReference type="OrthoDB" id="9806430at2"/>
<dbReference type="UniPathway" id="UPA00035">
    <property type="reaction ID" value="UER00041"/>
</dbReference>
<dbReference type="Proteomes" id="UP000006904">
    <property type="component" value="Chromosome"/>
</dbReference>
<dbReference type="GO" id="GO:0005829">
    <property type="term" value="C:cytosol"/>
    <property type="evidence" value="ECO:0007669"/>
    <property type="project" value="TreeGrafter"/>
</dbReference>
<dbReference type="GO" id="GO:0004048">
    <property type="term" value="F:anthranilate phosphoribosyltransferase activity"/>
    <property type="evidence" value="ECO:0007669"/>
    <property type="project" value="UniProtKB-UniRule"/>
</dbReference>
<dbReference type="GO" id="GO:0000287">
    <property type="term" value="F:magnesium ion binding"/>
    <property type="evidence" value="ECO:0007669"/>
    <property type="project" value="UniProtKB-UniRule"/>
</dbReference>
<dbReference type="GO" id="GO:0000162">
    <property type="term" value="P:L-tryptophan biosynthetic process"/>
    <property type="evidence" value="ECO:0007669"/>
    <property type="project" value="UniProtKB-UniRule"/>
</dbReference>
<dbReference type="FunFam" id="3.40.1030.10:FF:000002">
    <property type="entry name" value="Anthranilate phosphoribosyltransferase"/>
    <property type="match status" value="1"/>
</dbReference>
<dbReference type="Gene3D" id="3.40.1030.10">
    <property type="entry name" value="Nucleoside phosphorylase/phosphoribosyltransferase catalytic domain"/>
    <property type="match status" value="1"/>
</dbReference>
<dbReference type="Gene3D" id="1.20.970.10">
    <property type="entry name" value="Transferase, Pyrimidine Nucleoside Phosphorylase, Chain C"/>
    <property type="match status" value="1"/>
</dbReference>
<dbReference type="HAMAP" id="MF_00211">
    <property type="entry name" value="TrpD"/>
    <property type="match status" value="1"/>
</dbReference>
<dbReference type="InterPro" id="IPR005940">
    <property type="entry name" value="Anthranilate_Pribosyl_Tfrase"/>
</dbReference>
<dbReference type="InterPro" id="IPR000312">
    <property type="entry name" value="Glycosyl_Trfase_fam3"/>
</dbReference>
<dbReference type="InterPro" id="IPR017459">
    <property type="entry name" value="Glycosyl_Trfase_fam3_N_dom"/>
</dbReference>
<dbReference type="InterPro" id="IPR036320">
    <property type="entry name" value="Glycosyl_Trfase_fam3_N_dom_sf"/>
</dbReference>
<dbReference type="InterPro" id="IPR035902">
    <property type="entry name" value="Nuc_phospho_transferase"/>
</dbReference>
<dbReference type="NCBIfam" id="TIGR01245">
    <property type="entry name" value="trpD"/>
    <property type="match status" value="1"/>
</dbReference>
<dbReference type="PANTHER" id="PTHR43285">
    <property type="entry name" value="ANTHRANILATE PHOSPHORIBOSYLTRANSFERASE"/>
    <property type="match status" value="1"/>
</dbReference>
<dbReference type="PANTHER" id="PTHR43285:SF2">
    <property type="entry name" value="ANTHRANILATE PHOSPHORIBOSYLTRANSFERASE"/>
    <property type="match status" value="1"/>
</dbReference>
<dbReference type="Pfam" id="PF02885">
    <property type="entry name" value="Glycos_trans_3N"/>
    <property type="match status" value="1"/>
</dbReference>
<dbReference type="Pfam" id="PF00591">
    <property type="entry name" value="Glycos_transf_3"/>
    <property type="match status" value="1"/>
</dbReference>
<dbReference type="SUPFAM" id="SSF52418">
    <property type="entry name" value="Nucleoside phosphorylase/phosphoribosyltransferase catalytic domain"/>
    <property type="match status" value="1"/>
</dbReference>
<dbReference type="SUPFAM" id="SSF47648">
    <property type="entry name" value="Nucleoside phosphorylase/phosphoribosyltransferase N-terminal domain"/>
    <property type="match status" value="1"/>
</dbReference>
<feature type="chain" id="PRO_1000198809" description="Anthranilate phosphoribosyltransferase">
    <location>
        <begin position="1"/>
        <end position="342"/>
    </location>
</feature>
<feature type="binding site" evidence="1">
    <location>
        <position position="79"/>
    </location>
    <ligand>
        <name>5-phospho-alpha-D-ribose 1-diphosphate</name>
        <dbReference type="ChEBI" id="CHEBI:58017"/>
    </ligand>
</feature>
<feature type="binding site" evidence="1">
    <location>
        <position position="79"/>
    </location>
    <ligand>
        <name>anthranilate</name>
        <dbReference type="ChEBI" id="CHEBI:16567"/>
        <label>1</label>
    </ligand>
</feature>
<feature type="binding site" evidence="1">
    <location>
        <begin position="82"/>
        <end position="83"/>
    </location>
    <ligand>
        <name>5-phospho-alpha-D-ribose 1-diphosphate</name>
        <dbReference type="ChEBI" id="CHEBI:58017"/>
    </ligand>
</feature>
<feature type="binding site" evidence="1">
    <location>
        <position position="87"/>
    </location>
    <ligand>
        <name>5-phospho-alpha-D-ribose 1-diphosphate</name>
        <dbReference type="ChEBI" id="CHEBI:58017"/>
    </ligand>
</feature>
<feature type="binding site" evidence="1">
    <location>
        <begin position="89"/>
        <end position="92"/>
    </location>
    <ligand>
        <name>5-phospho-alpha-D-ribose 1-diphosphate</name>
        <dbReference type="ChEBI" id="CHEBI:58017"/>
    </ligand>
</feature>
<feature type="binding site" evidence="1">
    <location>
        <position position="91"/>
    </location>
    <ligand>
        <name>Mg(2+)</name>
        <dbReference type="ChEBI" id="CHEBI:18420"/>
        <label>1</label>
    </ligand>
</feature>
<feature type="binding site" evidence="1">
    <location>
        <begin position="107"/>
        <end position="115"/>
    </location>
    <ligand>
        <name>5-phospho-alpha-D-ribose 1-diphosphate</name>
        <dbReference type="ChEBI" id="CHEBI:58017"/>
    </ligand>
</feature>
<feature type="binding site" evidence="1">
    <location>
        <position position="110"/>
    </location>
    <ligand>
        <name>anthranilate</name>
        <dbReference type="ChEBI" id="CHEBI:16567"/>
        <label>1</label>
    </ligand>
</feature>
<feature type="binding site" evidence="1">
    <location>
        <position position="119"/>
    </location>
    <ligand>
        <name>5-phospho-alpha-D-ribose 1-diphosphate</name>
        <dbReference type="ChEBI" id="CHEBI:58017"/>
    </ligand>
</feature>
<feature type="binding site" evidence="1">
    <location>
        <position position="165"/>
    </location>
    <ligand>
        <name>anthranilate</name>
        <dbReference type="ChEBI" id="CHEBI:16567"/>
        <label>2</label>
    </ligand>
</feature>
<feature type="binding site" evidence="1">
    <location>
        <position position="223"/>
    </location>
    <ligand>
        <name>Mg(2+)</name>
        <dbReference type="ChEBI" id="CHEBI:18420"/>
        <label>2</label>
    </ligand>
</feature>
<feature type="binding site" evidence="1">
    <location>
        <position position="224"/>
    </location>
    <ligand>
        <name>Mg(2+)</name>
        <dbReference type="ChEBI" id="CHEBI:18420"/>
        <label>1</label>
    </ligand>
</feature>
<feature type="binding site" evidence="1">
    <location>
        <position position="224"/>
    </location>
    <ligand>
        <name>Mg(2+)</name>
        <dbReference type="ChEBI" id="CHEBI:18420"/>
        <label>2</label>
    </ligand>
</feature>
<protein>
    <recommendedName>
        <fullName evidence="1">Anthranilate phosphoribosyltransferase</fullName>
        <ecNumber evidence="1">2.4.2.18</ecNumber>
    </recommendedName>
</protein>
<gene>
    <name evidence="1" type="primary">trpD</name>
    <name type="ordered locus">BUAP5A_275</name>
</gene>
<proteinExistence type="inferred from homology"/>
<name>TRPD_BUCA5</name>
<organism>
    <name type="scientific">Buchnera aphidicola subsp. Acyrthosiphon pisum (strain 5A)</name>
    <dbReference type="NCBI Taxonomy" id="563178"/>
    <lineage>
        <taxon>Bacteria</taxon>
        <taxon>Pseudomonadati</taxon>
        <taxon>Pseudomonadota</taxon>
        <taxon>Gammaproteobacteria</taxon>
        <taxon>Enterobacterales</taxon>
        <taxon>Erwiniaceae</taxon>
        <taxon>Buchnera</taxon>
    </lineage>
</organism>
<accession>B8D972</accession>
<comment type="function">
    <text evidence="1">Catalyzes the transfer of the phosphoribosyl group of 5-phosphorylribose-1-pyrophosphate (PRPP) to anthranilate to yield N-(5'-phosphoribosyl)-anthranilate (PRA).</text>
</comment>
<comment type="catalytic activity">
    <reaction evidence="1">
        <text>N-(5-phospho-beta-D-ribosyl)anthranilate + diphosphate = 5-phospho-alpha-D-ribose 1-diphosphate + anthranilate</text>
        <dbReference type="Rhea" id="RHEA:11768"/>
        <dbReference type="ChEBI" id="CHEBI:16567"/>
        <dbReference type="ChEBI" id="CHEBI:18277"/>
        <dbReference type="ChEBI" id="CHEBI:33019"/>
        <dbReference type="ChEBI" id="CHEBI:58017"/>
        <dbReference type="EC" id="2.4.2.18"/>
    </reaction>
</comment>
<comment type="cofactor">
    <cofactor evidence="1">
        <name>Mg(2+)</name>
        <dbReference type="ChEBI" id="CHEBI:18420"/>
    </cofactor>
    <text evidence="1">Binds 2 magnesium ions per monomer.</text>
</comment>
<comment type="pathway">
    <text evidence="1">Amino-acid biosynthesis; L-tryptophan biosynthesis; L-tryptophan from chorismate: step 2/5.</text>
</comment>
<comment type="subunit">
    <text evidence="1">Homodimer.</text>
</comment>
<comment type="similarity">
    <text evidence="1">Belongs to the anthranilate phosphoribosyltransferase family.</text>
</comment>
<sequence length="342" mass="38756">MRNILLKIYDSKFLNQEESYQLFTLISSGKITDIKLASILTAMKIRGESIEEITGAIKAFLDKMKYFPKPDYIFSDIVGTGGDAKNTINISTMSAFVAATCGLKIIKHCNQRISSKSGSSDILEKFNINLNASPEKSRKTLDQLNICFLFAPKYHDGFKYSNNVRTDLKTKTIFNFLGPFLNPATPPLSVIGVYNKNLINIAVNILKNLQYKRAIVLHSDNTDEVTLYGTTYVSELLNKKIISYQLQPESFGLKMHPKKILKINSLEENYHIIKEIMKGKGSKLYEELIAVNVAMLLKVFGYENLKENTKLALNKIRSGDVYKHIRNVANMLKEDNHARHNT</sequence>
<evidence type="ECO:0000255" key="1">
    <source>
        <dbReference type="HAMAP-Rule" id="MF_00211"/>
    </source>
</evidence>
<reference key="1">
    <citation type="journal article" date="2009" name="Science">
        <title>The dynamics and time scale of ongoing genomic erosion in symbiotic bacteria.</title>
        <authorList>
            <person name="Moran N.A."/>
            <person name="McLaughlin H.J."/>
            <person name="Sorek R."/>
        </authorList>
    </citation>
    <scope>NUCLEOTIDE SEQUENCE [LARGE SCALE GENOMIC DNA]</scope>
    <source>
        <strain>5A</strain>
    </source>
</reference>